<proteinExistence type="inferred from homology"/>
<sequence length="189" mass="21043">MQHPASGESWLARPPRTAERRLRPWLTDPASLTARIRMRCGMFGVRVLRQSAGALTPDERRLLGLRAGERALLREVLLIADGRPVVFARSVLAQREQRGGWLRLWRGIGSRPLGAALFSDPRIRRQPLACARIGAADARYHLARRALAGAATLPPALWARRSVFRLHGRSLLVSEFFLPAILGLPDDPL</sequence>
<dbReference type="EC" id="4.1.3.40" evidence="1"/>
<dbReference type="EMBL" id="AM406670">
    <property type="protein sequence ID" value="CAL93095.1"/>
    <property type="molecule type" value="Genomic_DNA"/>
</dbReference>
<dbReference type="RefSeq" id="WP_011764213.1">
    <property type="nucleotide sequence ID" value="NC_008702.1"/>
</dbReference>
<dbReference type="SMR" id="A1K2P0"/>
<dbReference type="STRING" id="62928.azo0478"/>
<dbReference type="KEGG" id="aoa:dqs_0489"/>
<dbReference type="KEGG" id="azo:azo0478"/>
<dbReference type="eggNOG" id="COG3161">
    <property type="taxonomic scope" value="Bacteria"/>
</dbReference>
<dbReference type="HOGENOM" id="CLU_096824_2_0_4"/>
<dbReference type="UniPathway" id="UPA00232"/>
<dbReference type="Proteomes" id="UP000002588">
    <property type="component" value="Chromosome"/>
</dbReference>
<dbReference type="GO" id="GO:0005829">
    <property type="term" value="C:cytosol"/>
    <property type="evidence" value="ECO:0007669"/>
    <property type="project" value="TreeGrafter"/>
</dbReference>
<dbReference type="GO" id="GO:0008813">
    <property type="term" value="F:chorismate lyase activity"/>
    <property type="evidence" value="ECO:0007669"/>
    <property type="project" value="UniProtKB-UniRule"/>
</dbReference>
<dbReference type="GO" id="GO:0042866">
    <property type="term" value="P:pyruvate biosynthetic process"/>
    <property type="evidence" value="ECO:0007669"/>
    <property type="project" value="UniProtKB-UniRule"/>
</dbReference>
<dbReference type="GO" id="GO:0006744">
    <property type="term" value="P:ubiquinone biosynthetic process"/>
    <property type="evidence" value="ECO:0007669"/>
    <property type="project" value="UniProtKB-UniRule"/>
</dbReference>
<dbReference type="Gene3D" id="3.40.1410.10">
    <property type="entry name" value="Chorismate lyase-like"/>
    <property type="match status" value="1"/>
</dbReference>
<dbReference type="HAMAP" id="MF_01632">
    <property type="entry name" value="UbiC"/>
    <property type="match status" value="1"/>
</dbReference>
<dbReference type="InterPro" id="IPR007440">
    <property type="entry name" value="Chorismate--pyruvate_lyase"/>
</dbReference>
<dbReference type="InterPro" id="IPR028978">
    <property type="entry name" value="Chorismate_lyase_/UTRA_dom_sf"/>
</dbReference>
<dbReference type="PANTHER" id="PTHR38683">
    <property type="entry name" value="CHORISMATE PYRUVATE-LYASE"/>
    <property type="match status" value="1"/>
</dbReference>
<dbReference type="PANTHER" id="PTHR38683:SF1">
    <property type="entry name" value="CHORISMATE PYRUVATE-LYASE"/>
    <property type="match status" value="1"/>
</dbReference>
<dbReference type="Pfam" id="PF04345">
    <property type="entry name" value="Chor_lyase"/>
    <property type="match status" value="1"/>
</dbReference>
<dbReference type="SUPFAM" id="SSF64288">
    <property type="entry name" value="Chorismate lyase-like"/>
    <property type="match status" value="1"/>
</dbReference>
<comment type="function">
    <text evidence="1">Removes the pyruvyl group from chorismate, with concomitant aromatization of the ring, to provide 4-hydroxybenzoate (4HB) for the ubiquinone pathway.</text>
</comment>
<comment type="catalytic activity">
    <reaction evidence="1">
        <text>chorismate = 4-hydroxybenzoate + pyruvate</text>
        <dbReference type="Rhea" id="RHEA:16505"/>
        <dbReference type="ChEBI" id="CHEBI:15361"/>
        <dbReference type="ChEBI" id="CHEBI:17879"/>
        <dbReference type="ChEBI" id="CHEBI:29748"/>
        <dbReference type="EC" id="4.1.3.40"/>
    </reaction>
</comment>
<comment type="pathway">
    <text evidence="1">Cofactor biosynthesis; ubiquinone biosynthesis.</text>
</comment>
<comment type="subcellular location">
    <subcellularLocation>
        <location evidence="1">Cytoplasm</location>
    </subcellularLocation>
</comment>
<comment type="similarity">
    <text evidence="1">Belongs to the UbiC family.</text>
</comment>
<protein>
    <recommendedName>
        <fullName evidence="1">Probable chorismate pyruvate-lyase</fullName>
        <shortName evidence="1">CL</shortName>
        <shortName evidence="1">CPL</shortName>
        <ecNumber evidence="1">4.1.3.40</ecNumber>
    </recommendedName>
</protein>
<feature type="chain" id="PRO_0000292062" description="Probable chorismate pyruvate-lyase">
    <location>
        <begin position="1"/>
        <end position="189"/>
    </location>
</feature>
<feature type="binding site" evidence="1">
    <location>
        <position position="74"/>
    </location>
    <ligand>
        <name>substrate</name>
    </ligand>
</feature>
<feature type="binding site" evidence="1">
    <location>
        <position position="113"/>
    </location>
    <ligand>
        <name>substrate</name>
    </ligand>
</feature>
<feature type="binding site" evidence="1">
    <location>
        <position position="175"/>
    </location>
    <ligand>
        <name>substrate</name>
    </ligand>
</feature>
<keyword id="KW-0963">Cytoplasm</keyword>
<keyword id="KW-0456">Lyase</keyword>
<keyword id="KW-0670">Pyruvate</keyword>
<keyword id="KW-1185">Reference proteome</keyword>
<keyword id="KW-0831">Ubiquinone biosynthesis</keyword>
<organism>
    <name type="scientific">Azoarcus sp. (strain BH72)</name>
    <dbReference type="NCBI Taxonomy" id="418699"/>
    <lineage>
        <taxon>Bacteria</taxon>
        <taxon>Pseudomonadati</taxon>
        <taxon>Pseudomonadota</taxon>
        <taxon>Betaproteobacteria</taxon>
        <taxon>Rhodocyclales</taxon>
        <taxon>Zoogloeaceae</taxon>
        <taxon>Azoarcus</taxon>
    </lineage>
</organism>
<gene>
    <name evidence="1" type="primary">ubiC</name>
    <name type="ordered locus">azo0478</name>
</gene>
<accession>A1K2P0</accession>
<name>UBIC_AZOSB</name>
<reference key="1">
    <citation type="journal article" date="2006" name="Nat. Biotechnol.">
        <title>Complete genome of the mutualistic, N2-fixing grass endophyte Azoarcus sp. strain BH72.</title>
        <authorList>
            <person name="Krause A."/>
            <person name="Ramakumar A."/>
            <person name="Bartels D."/>
            <person name="Battistoni F."/>
            <person name="Bekel T."/>
            <person name="Boch J."/>
            <person name="Boehm M."/>
            <person name="Friedrich F."/>
            <person name="Hurek T."/>
            <person name="Krause L."/>
            <person name="Linke B."/>
            <person name="McHardy A.C."/>
            <person name="Sarkar A."/>
            <person name="Schneiker S."/>
            <person name="Syed A.A."/>
            <person name="Thauer R."/>
            <person name="Vorhoelter F.-J."/>
            <person name="Weidner S."/>
            <person name="Puehler A."/>
            <person name="Reinhold-Hurek B."/>
            <person name="Kaiser O."/>
            <person name="Goesmann A."/>
        </authorList>
    </citation>
    <scope>NUCLEOTIDE SEQUENCE [LARGE SCALE GENOMIC DNA]</scope>
    <source>
        <strain>BH72</strain>
    </source>
</reference>
<evidence type="ECO:0000255" key="1">
    <source>
        <dbReference type="HAMAP-Rule" id="MF_01632"/>
    </source>
</evidence>